<protein>
    <recommendedName>
        <fullName evidence="1">ATP synthase subunit a</fullName>
    </recommendedName>
    <alternativeName>
        <fullName evidence="1">ATP synthase F0 sector subunit a</fullName>
    </alternativeName>
    <alternativeName>
        <fullName evidence="1">F-ATPase subunit 6</fullName>
    </alternativeName>
</protein>
<proteinExistence type="inferred from homology"/>
<name>ATP6_HYDS0</name>
<comment type="function">
    <text evidence="1">Key component of the proton channel; it plays a direct role in the translocation of protons across the membrane.</text>
</comment>
<comment type="subunit">
    <text evidence="1">F-type ATPases have 2 components, CF(1) - the catalytic core - and CF(0) - the membrane proton channel. CF(1) has five subunits: alpha(3), beta(3), gamma(1), delta(1), epsilon(1). CF(0) has three main subunits: a(1), b(2) and c(9-12). The alpha and beta chains form an alternating ring which encloses part of the gamma chain. CF(1) is attached to CF(0) by a central stalk formed by the gamma and epsilon chains, while a peripheral stalk is formed by the delta and b chains.</text>
</comment>
<comment type="subcellular location">
    <subcellularLocation>
        <location evidence="1">Cell inner membrane</location>
        <topology evidence="1">Multi-pass membrane protein</topology>
    </subcellularLocation>
</comment>
<comment type="similarity">
    <text evidence="1">Belongs to the ATPase A chain family.</text>
</comment>
<organism>
    <name type="scientific">Hydrogenobaculum sp. (strain Y04AAS1)</name>
    <dbReference type="NCBI Taxonomy" id="380749"/>
    <lineage>
        <taxon>Bacteria</taxon>
        <taxon>Pseudomonadati</taxon>
        <taxon>Aquificota</taxon>
        <taxon>Aquificia</taxon>
        <taxon>Aquificales</taxon>
        <taxon>Aquificaceae</taxon>
        <taxon>Hydrogenobaculum</taxon>
    </lineage>
</organism>
<gene>
    <name evidence="1" type="primary">atpB</name>
    <name type="ordered locus">HY04AAS1_0877</name>
</gene>
<evidence type="ECO:0000255" key="1">
    <source>
        <dbReference type="HAMAP-Rule" id="MF_01393"/>
    </source>
</evidence>
<dbReference type="EMBL" id="CP001130">
    <property type="protein sequence ID" value="ACG57564.1"/>
    <property type="molecule type" value="Genomic_DNA"/>
</dbReference>
<dbReference type="RefSeq" id="WP_012513920.1">
    <property type="nucleotide sequence ID" value="NC_011126.1"/>
</dbReference>
<dbReference type="SMR" id="B4U8V3"/>
<dbReference type="STRING" id="380749.HY04AAS1_0877"/>
<dbReference type="KEGG" id="hya:HY04AAS1_0877"/>
<dbReference type="eggNOG" id="COG0356">
    <property type="taxonomic scope" value="Bacteria"/>
</dbReference>
<dbReference type="HOGENOM" id="CLU_041018_2_2_0"/>
<dbReference type="OrthoDB" id="9789241at2"/>
<dbReference type="GO" id="GO:0005886">
    <property type="term" value="C:plasma membrane"/>
    <property type="evidence" value="ECO:0007669"/>
    <property type="project" value="UniProtKB-SubCell"/>
</dbReference>
<dbReference type="GO" id="GO:0045259">
    <property type="term" value="C:proton-transporting ATP synthase complex"/>
    <property type="evidence" value="ECO:0007669"/>
    <property type="project" value="UniProtKB-KW"/>
</dbReference>
<dbReference type="GO" id="GO:0046933">
    <property type="term" value="F:proton-transporting ATP synthase activity, rotational mechanism"/>
    <property type="evidence" value="ECO:0007669"/>
    <property type="project" value="UniProtKB-UniRule"/>
</dbReference>
<dbReference type="GO" id="GO:0042777">
    <property type="term" value="P:proton motive force-driven plasma membrane ATP synthesis"/>
    <property type="evidence" value="ECO:0007669"/>
    <property type="project" value="TreeGrafter"/>
</dbReference>
<dbReference type="CDD" id="cd00310">
    <property type="entry name" value="ATP-synt_Fo_a_6"/>
    <property type="match status" value="1"/>
</dbReference>
<dbReference type="Gene3D" id="1.20.120.220">
    <property type="entry name" value="ATP synthase, F0 complex, subunit A"/>
    <property type="match status" value="1"/>
</dbReference>
<dbReference type="HAMAP" id="MF_01393">
    <property type="entry name" value="ATP_synth_a_bact"/>
    <property type="match status" value="1"/>
</dbReference>
<dbReference type="InterPro" id="IPR045082">
    <property type="entry name" value="ATP_syn_F0_a_bact/chloroplast"/>
</dbReference>
<dbReference type="InterPro" id="IPR000568">
    <property type="entry name" value="ATP_synth_F0_asu"/>
</dbReference>
<dbReference type="InterPro" id="IPR023011">
    <property type="entry name" value="ATP_synth_F0_asu_AS"/>
</dbReference>
<dbReference type="InterPro" id="IPR035908">
    <property type="entry name" value="F0_ATP_A_sf"/>
</dbReference>
<dbReference type="NCBIfam" id="TIGR01131">
    <property type="entry name" value="ATP_synt_6_or_A"/>
    <property type="match status" value="1"/>
</dbReference>
<dbReference type="PANTHER" id="PTHR42823">
    <property type="entry name" value="ATP SYNTHASE SUBUNIT A, CHLOROPLASTIC"/>
    <property type="match status" value="1"/>
</dbReference>
<dbReference type="PANTHER" id="PTHR42823:SF3">
    <property type="entry name" value="ATP SYNTHASE SUBUNIT A, CHLOROPLASTIC"/>
    <property type="match status" value="1"/>
</dbReference>
<dbReference type="Pfam" id="PF00119">
    <property type="entry name" value="ATP-synt_A"/>
    <property type="match status" value="1"/>
</dbReference>
<dbReference type="PRINTS" id="PR00123">
    <property type="entry name" value="ATPASEA"/>
</dbReference>
<dbReference type="SUPFAM" id="SSF81336">
    <property type="entry name" value="F1F0 ATP synthase subunit A"/>
    <property type="match status" value="1"/>
</dbReference>
<dbReference type="PROSITE" id="PS00449">
    <property type="entry name" value="ATPASE_A"/>
    <property type="match status" value="1"/>
</dbReference>
<sequence length="217" mass="23875">MEHYEHVITSIVAMVVALGVVLAAGKPKIMPSKLQFVIESYINFCKSMVTENMGEQGLRYLPLIASIGLFVFFGNVMELLPFVDAPTGNINTTLALTLIVFFLYHFEGFRVNGLGYIKHFMGPIKALAPFFFIIEIMSHLGRVVSLSLRLFANMKGGAILLISIIGVLIGNPFTLAVSPIVLVFLITIKVLAIVLQAFIFMILSTIYIAGAVVHEEH</sequence>
<reference key="1">
    <citation type="journal article" date="2009" name="J. Bacteriol.">
        <title>Complete and draft genome sequences of six members of the Aquificales.</title>
        <authorList>
            <person name="Reysenbach A.-L."/>
            <person name="Hamamura N."/>
            <person name="Podar M."/>
            <person name="Griffiths E."/>
            <person name="Ferreira S."/>
            <person name="Hochstein R."/>
            <person name="Heidelberg J."/>
            <person name="Johnson J."/>
            <person name="Mead D."/>
            <person name="Pohorille A."/>
            <person name="Sarmiento M."/>
            <person name="Schweighofer K."/>
            <person name="Seshadri R."/>
            <person name="Voytek M.A."/>
        </authorList>
    </citation>
    <scope>NUCLEOTIDE SEQUENCE [LARGE SCALE GENOMIC DNA]</scope>
    <source>
        <strain>Y04AAS1</strain>
    </source>
</reference>
<accession>B4U8V3</accession>
<feature type="chain" id="PRO_5000389999" description="ATP synthase subunit a">
    <location>
        <begin position="1"/>
        <end position="217"/>
    </location>
</feature>
<feature type="transmembrane region" description="Helical" evidence="1">
    <location>
        <begin position="5"/>
        <end position="25"/>
    </location>
</feature>
<feature type="transmembrane region" description="Helical" evidence="1">
    <location>
        <begin position="63"/>
        <end position="83"/>
    </location>
</feature>
<feature type="transmembrane region" description="Helical" evidence="1">
    <location>
        <begin position="89"/>
        <end position="109"/>
    </location>
</feature>
<feature type="transmembrane region" description="Helical" evidence="1">
    <location>
        <begin position="120"/>
        <end position="140"/>
    </location>
</feature>
<feature type="transmembrane region" description="Helical" evidence="1">
    <location>
        <begin position="157"/>
        <end position="177"/>
    </location>
</feature>
<feature type="transmembrane region" description="Helical" evidence="1">
    <location>
        <begin position="191"/>
        <end position="213"/>
    </location>
</feature>
<keyword id="KW-0066">ATP synthesis</keyword>
<keyword id="KW-0997">Cell inner membrane</keyword>
<keyword id="KW-1003">Cell membrane</keyword>
<keyword id="KW-0138">CF(0)</keyword>
<keyword id="KW-0375">Hydrogen ion transport</keyword>
<keyword id="KW-0406">Ion transport</keyword>
<keyword id="KW-0472">Membrane</keyword>
<keyword id="KW-0812">Transmembrane</keyword>
<keyword id="KW-1133">Transmembrane helix</keyword>
<keyword id="KW-0813">Transport</keyword>